<proteinExistence type="inferred from homology"/>
<organism>
    <name type="scientific">Archaeoglobus fulgidus (strain ATCC 49558 / DSM 4304 / JCM 9628 / NBRC 100126 / VC-16)</name>
    <dbReference type="NCBI Taxonomy" id="224325"/>
    <lineage>
        <taxon>Archaea</taxon>
        <taxon>Methanobacteriati</taxon>
        <taxon>Methanobacteriota</taxon>
        <taxon>Archaeoglobi</taxon>
        <taxon>Archaeoglobales</taxon>
        <taxon>Archaeoglobaceae</taxon>
        <taxon>Archaeoglobus</taxon>
    </lineage>
</organism>
<dbReference type="EC" id="4.1.1.11" evidence="1"/>
<dbReference type="EMBL" id="AE000782">
    <property type="protein sequence ID" value="AAB89250.1"/>
    <property type="molecule type" value="Genomic_DNA"/>
</dbReference>
<dbReference type="PIR" id="C69500">
    <property type="entry name" value="C69500"/>
</dbReference>
<dbReference type="RefSeq" id="WP_010879496.1">
    <property type="nucleotide sequence ID" value="NC_000917.1"/>
</dbReference>
<dbReference type="SMR" id="O28275"/>
<dbReference type="STRING" id="224325.AF_2004"/>
<dbReference type="PaxDb" id="224325-AF_2004"/>
<dbReference type="EnsemblBacteria" id="AAB89250">
    <property type="protein sequence ID" value="AAB89250"/>
    <property type="gene ID" value="AF_2004"/>
</dbReference>
<dbReference type="GeneID" id="24795749"/>
<dbReference type="KEGG" id="afu:AF_2004"/>
<dbReference type="eggNOG" id="arCOG00027">
    <property type="taxonomic scope" value="Archaea"/>
</dbReference>
<dbReference type="HOGENOM" id="CLU_028929_2_1_2"/>
<dbReference type="OrthoDB" id="56891at2157"/>
<dbReference type="PhylomeDB" id="O28275"/>
<dbReference type="UniPathway" id="UPA00241"/>
<dbReference type="Proteomes" id="UP000002199">
    <property type="component" value="Chromosome"/>
</dbReference>
<dbReference type="GO" id="GO:0004068">
    <property type="term" value="F:aspartate 1-decarboxylase activity"/>
    <property type="evidence" value="ECO:0007669"/>
    <property type="project" value="UniProtKB-UniRule"/>
</dbReference>
<dbReference type="GO" id="GO:0030170">
    <property type="term" value="F:pyridoxal phosphate binding"/>
    <property type="evidence" value="ECO:0007669"/>
    <property type="project" value="UniProtKB-UniRule"/>
</dbReference>
<dbReference type="GO" id="GO:0019752">
    <property type="term" value="P:carboxylic acid metabolic process"/>
    <property type="evidence" value="ECO:0007669"/>
    <property type="project" value="InterPro"/>
</dbReference>
<dbReference type="GO" id="GO:0015937">
    <property type="term" value="P:coenzyme A biosynthetic process"/>
    <property type="evidence" value="ECO:0007669"/>
    <property type="project" value="UniProtKB-UniRule"/>
</dbReference>
<dbReference type="Gene3D" id="3.90.1150.10">
    <property type="entry name" value="Aspartate Aminotransferase, domain 1"/>
    <property type="match status" value="1"/>
</dbReference>
<dbReference type="Gene3D" id="3.40.640.10">
    <property type="entry name" value="Type I PLP-dependent aspartate aminotransferase-like (Major domain)"/>
    <property type="match status" value="1"/>
</dbReference>
<dbReference type="HAMAP" id="MF_01610">
    <property type="entry name" value="MfnA_decarbox"/>
    <property type="match status" value="1"/>
</dbReference>
<dbReference type="InterPro" id="IPR050477">
    <property type="entry name" value="GrpII_AminoAcid_Decarb"/>
</dbReference>
<dbReference type="InterPro" id="IPR020931">
    <property type="entry name" value="MfnA"/>
</dbReference>
<dbReference type="InterPro" id="IPR002129">
    <property type="entry name" value="PyrdxlP-dep_de-COase"/>
</dbReference>
<dbReference type="InterPro" id="IPR015424">
    <property type="entry name" value="PyrdxlP-dep_Trfase"/>
</dbReference>
<dbReference type="InterPro" id="IPR015421">
    <property type="entry name" value="PyrdxlP-dep_Trfase_major"/>
</dbReference>
<dbReference type="InterPro" id="IPR015422">
    <property type="entry name" value="PyrdxlP-dep_Trfase_small"/>
</dbReference>
<dbReference type="InterPro" id="IPR021115">
    <property type="entry name" value="Pyridoxal-P_BS"/>
</dbReference>
<dbReference type="NCBIfam" id="TIGR03812">
    <property type="entry name" value="tyr_de_CO2_Arch"/>
    <property type="match status" value="1"/>
</dbReference>
<dbReference type="PANTHER" id="PTHR42735">
    <property type="match status" value="1"/>
</dbReference>
<dbReference type="PANTHER" id="PTHR42735:SF6">
    <property type="entry name" value="SPHINGOSINE-1-PHOSPHATE LYASE 1"/>
    <property type="match status" value="1"/>
</dbReference>
<dbReference type="Pfam" id="PF00282">
    <property type="entry name" value="Pyridoxal_deC"/>
    <property type="match status" value="1"/>
</dbReference>
<dbReference type="SUPFAM" id="SSF53383">
    <property type="entry name" value="PLP-dependent transferases"/>
    <property type="match status" value="1"/>
</dbReference>
<dbReference type="PROSITE" id="PS00392">
    <property type="entry name" value="DDC_GAD_HDC_YDC"/>
    <property type="match status" value="1"/>
</dbReference>
<name>MFNA_ARCFU</name>
<keyword id="KW-0210">Decarboxylase</keyword>
<keyword id="KW-0456">Lyase</keyword>
<keyword id="KW-0663">Pyridoxal phosphate</keyword>
<keyword id="KW-1185">Reference proteome</keyword>
<feature type="chain" id="PRO_0000147019" description="Probable L-aspartate decarboxylase">
    <location>
        <begin position="1"/>
        <end position="367"/>
    </location>
</feature>
<feature type="modified residue" description="N6-(pyridoxal phosphate)lysine" evidence="1">
    <location>
        <position position="216"/>
    </location>
</feature>
<sequence length="367" mass="41171">MDIIEELRAYREKDIPYSRVLSSMCTVPHPVAVEAHRMFIETNLGDPGIFRGTVELEAKLMRLIGDILHCETPAGYICSGGTEANIQGIRAARNVQKKENPNIVIPKTAHFSFEKIGDILGVKIKRAGVDEEYKVDVGQVEDLMDENTVAIVGIAGTTELGQIDPIVELSKLAEERQVELHVDAAFGGLVIPFMDNPYPFDFQNRGVSSITIDPHKMGMATIPAGGIIFRNESYLRALEVETPYLTSKTQFTLTGTRPGTGVASAYAVLKSLGFEGMREVVKNCLKNTRILVEEMRDLGFEPVIEPVMNVVSFRTDEAERIKEELYRMRWVISTIREPKAIRFVVMPHVTEEVIKNFISDFRKVLRR</sequence>
<evidence type="ECO:0000255" key="1">
    <source>
        <dbReference type="HAMAP-Rule" id="MF_01610"/>
    </source>
</evidence>
<protein>
    <recommendedName>
        <fullName evidence="1">Probable L-aspartate decarboxylase</fullName>
        <shortName evidence="1">ADC</shortName>
        <ecNumber evidence="1">4.1.1.11</ecNumber>
    </recommendedName>
</protein>
<gene>
    <name evidence="1" type="primary">mfnA</name>
    <name type="ordered locus">AF_2004</name>
</gene>
<comment type="function">
    <text evidence="1">Catalyzes the decarboxylation of L-aspartate to produce beta-alanine.</text>
</comment>
<comment type="catalytic activity">
    <reaction evidence="1">
        <text>L-aspartate + H(+) = beta-alanine + CO2</text>
        <dbReference type="Rhea" id="RHEA:19497"/>
        <dbReference type="ChEBI" id="CHEBI:15378"/>
        <dbReference type="ChEBI" id="CHEBI:16526"/>
        <dbReference type="ChEBI" id="CHEBI:29991"/>
        <dbReference type="ChEBI" id="CHEBI:57966"/>
        <dbReference type="EC" id="4.1.1.11"/>
    </reaction>
</comment>
<comment type="cofactor">
    <cofactor evidence="1">
        <name>pyridoxal 5'-phosphate</name>
        <dbReference type="ChEBI" id="CHEBI:597326"/>
    </cofactor>
</comment>
<comment type="pathway">
    <text evidence="1">Cofactor biosynthesis; coenzyme A biosynthesis.</text>
</comment>
<comment type="similarity">
    <text evidence="1">Belongs to the group II decarboxylase family. MfnA subfamily.</text>
</comment>
<reference key="1">
    <citation type="journal article" date="1997" name="Nature">
        <title>The complete genome sequence of the hyperthermophilic, sulphate-reducing archaeon Archaeoglobus fulgidus.</title>
        <authorList>
            <person name="Klenk H.-P."/>
            <person name="Clayton R.A."/>
            <person name="Tomb J.-F."/>
            <person name="White O."/>
            <person name="Nelson K.E."/>
            <person name="Ketchum K.A."/>
            <person name="Dodson R.J."/>
            <person name="Gwinn M.L."/>
            <person name="Hickey E.K."/>
            <person name="Peterson J.D."/>
            <person name="Richardson D.L."/>
            <person name="Kerlavage A.R."/>
            <person name="Graham D.E."/>
            <person name="Kyrpides N.C."/>
            <person name="Fleischmann R.D."/>
            <person name="Quackenbush J."/>
            <person name="Lee N.H."/>
            <person name="Sutton G.G."/>
            <person name="Gill S.R."/>
            <person name="Kirkness E.F."/>
            <person name="Dougherty B.A."/>
            <person name="McKenney K."/>
            <person name="Adams M.D."/>
            <person name="Loftus B.J."/>
            <person name="Peterson S.N."/>
            <person name="Reich C.I."/>
            <person name="McNeil L.K."/>
            <person name="Badger J.H."/>
            <person name="Glodek A."/>
            <person name="Zhou L."/>
            <person name="Overbeek R."/>
            <person name="Gocayne J.D."/>
            <person name="Weidman J.F."/>
            <person name="McDonald L.A."/>
            <person name="Utterback T.R."/>
            <person name="Cotton M.D."/>
            <person name="Spriggs T."/>
            <person name="Artiach P."/>
            <person name="Kaine B.P."/>
            <person name="Sykes S.M."/>
            <person name="Sadow P.W."/>
            <person name="D'Andrea K.P."/>
            <person name="Bowman C."/>
            <person name="Fujii C."/>
            <person name="Garland S.A."/>
            <person name="Mason T.M."/>
            <person name="Olsen G.J."/>
            <person name="Fraser C.M."/>
            <person name="Smith H.O."/>
            <person name="Woese C.R."/>
            <person name="Venter J.C."/>
        </authorList>
    </citation>
    <scope>NUCLEOTIDE SEQUENCE [LARGE SCALE GENOMIC DNA]</scope>
    <source>
        <strain>ATCC 49558 / DSM 4304 / JCM 9628 / NBRC 100126 / VC-16</strain>
    </source>
</reference>
<accession>O28275</accession>